<name>PUS2_ARATH</name>
<proteinExistence type="evidence at transcript level"/>
<keyword id="KW-0025">Alternative splicing</keyword>
<keyword id="KW-0150">Chloroplast</keyword>
<keyword id="KW-0413">Isomerase</keyword>
<keyword id="KW-0934">Plastid</keyword>
<keyword id="KW-1185">Reference proteome</keyword>
<keyword id="KW-0694">RNA-binding</keyword>
<keyword id="KW-0809">Transit peptide</keyword>
<comment type="catalytic activity">
    <reaction>
        <text>a uridine in RNA = a pseudouridine in RNA</text>
        <dbReference type="Rhea" id="RHEA:48348"/>
        <dbReference type="Rhea" id="RHEA-COMP:12068"/>
        <dbReference type="Rhea" id="RHEA-COMP:12069"/>
        <dbReference type="ChEBI" id="CHEBI:65314"/>
        <dbReference type="ChEBI" id="CHEBI:65315"/>
    </reaction>
</comment>
<comment type="subcellular location">
    <subcellularLocation>
        <location evidence="6">Plastid</location>
        <location evidence="6">Chloroplast</location>
    </subcellularLocation>
</comment>
<comment type="alternative products">
    <event type="alternative splicing"/>
    <isoform>
        <id>Q3ECD0-1</id>
        <name>1</name>
        <sequence type="displayed"/>
    </isoform>
    <isoform>
        <id>Q3ECD0-2</id>
        <name>2</name>
        <sequence type="described" ref="VSP_036289"/>
    </isoform>
</comment>
<comment type="miscellaneous">
    <molecule>Isoform 2</molecule>
    <text evidence="6">May be due to a competing donor splice site.</text>
</comment>
<comment type="similarity">
    <text evidence="6">Belongs to the pseudouridine synthase RluA family.</text>
</comment>
<comment type="sequence caution" evidence="6">
    <conflict type="erroneous gene model prediction">
        <sequence resource="EMBL-CDS" id="AAF26765"/>
    </conflict>
    <text>The predicted gene has been split into 2 genes: At1g76040 and At1g76050.</text>
</comment>
<comment type="sequence caution" evidence="6">
    <conflict type="erroneous initiation">
        <sequence resource="EMBL-CDS" id="BAC42428"/>
    </conflict>
</comment>
<comment type="sequence caution" evidence="6">
    <conflict type="miscellaneous discrepancy">
        <sequence resource="EMBL" id="BX816325"/>
    </conflict>
    <text>Sequencing errors.</text>
</comment>
<evidence type="ECO:0000250" key="1"/>
<evidence type="ECO:0000255" key="2"/>
<evidence type="ECO:0000255" key="3">
    <source>
        <dbReference type="PROSITE-ProRule" id="PRU00182"/>
    </source>
</evidence>
<evidence type="ECO:0000256" key="4">
    <source>
        <dbReference type="SAM" id="MobiDB-lite"/>
    </source>
</evidence>
<evidence type="ECO:0000303" key="5">
    <source>
    </source>
</evidence>
<evidence type="ECO:0000305" key="6"/>
<sequence length="430" mass="46715">MLSISQLPSFSLTTAKSLRYPSSPSSSLSIFFSFFPKVSNFVRASSGIPNLVACSPTEIIIPRVNNAGLRIEEIVDAAKGKIRLDSWISSRINGVSRARVQSSIRLGLVTVNGRVVDKVSHNVKSGDEVNCTISELQPLKAEAEDIPLDIVYEDKHVLVVNKPAHMVVHPAPGNPTGTLVNGILHHCSLPCVDYSNSEEDDDSDEETFSDDEEMTTSPSSYAASVRPGIVHRLDKGTTGLLVVAKDEHSHAHLAEQFKLHTIERVYVSLTTGVPSPPQGRIEIPIGRDSSNRIRMAAIPGGVRGGRARHAASRYKVIETFAGGGSALVEWRLETGRTHQIRAHAKYMGVPLLGDEVYGGTKSMALSLLQKRVSRSDQEEIIELISRMDRPCLHAIVLGFTHPCTGEIVKFSCPPPSDLAEIVGLLRRSGL</sequence>
<reference key="1">
    <citation type="journal article" date="2000" name="Nature">
        <title>Sequence and analysis of chromosome 1 of the plant Arabidopsis thaliana.</title>
        <authorList>
            <person name="Theologis A."/>
            <person name="Ecker J.R."/>
            <person name="Palm C.J."/>
            <person name="Federspiel N.A."/>
            <person name="Kaul S."/>
            <person name="White O."/>
            <person name="Alonso J."/>
            <person name="Altafi H."/>
            <person name="Araujo R."/>
            <person name="Bowman C.L."/>
            <person name="Brooks S.Y."/>
            <person name="Buehler E."/>
            <person name="Chan A."/>
            <person name="Chao Q."/>
            <person name="Chen H."/>
            <person name="Cheuk R.F."/>
            <person name="Chin C.W."/>
            <person name="Chung M.K."/>
            <person name="Conn L."/>
            <person name="Conway A.B."/>
            <person name="Conway A.R."/>
            <person name="Creasy T.H."/>
            <person name="Dewar K."/>
            <person name="Dunn P."/>
            <person name="Etgu P."/>
            <person name="Feldblyum T.V."/>
            <person name="Feng J.-D."/>
            <person name="Fong B."/>
            <person name="Fujii C.Y."/>
            <person name="Gill J.E."/>
            <person name="Goldsmith A.D."/>
            <person name="Haas B."/>
            <person name="Hansen N.F."/>
            <person name="Hughes B."/>
            <person name="Huizar L."/>
            <person name="Hunter J.L."/>
            <person name="Jenkins J."/>
            <person name="Johnson-Hopson C."/>
            <person name="Khan S."/>
            <person name="Khaykin E."/>
            <person name="Kim C.J."/>
            <person name="Koo H.L."/>
            <person name="Kremenetskaia I."/>
            <person name="Kurtz D.B."/>
            <person name="Kwan A."/>
            <person name="Lam B."/>
            <person name="Langin-Hooper S."/>
            <person name="Lee A."/>
            <person name="Lee J.M."/>
            <person name="Lenz C.A."/>
            <person name="Li J.H."/>
            <person name="Li Y.-P."/>
            <person name="Lin X."/>
            <person name="Liu S.X."/>
            <person name="Liu Z.A."/>
            <person name="Luros J.S."/>
            <person name="Maiti R."/>
            <person name="Marziali A."/>
            <person name="Militscher J."/>
            <person name="Miranda M."/>
            <person name="Nguyen M."/>
            <person name="Nierman W.C."/>
            <person name="Osborne B.I."/>
            <person name="Pai G."/>
            <person name="Peterson J."/>
            <person name="Pham P.K."/>
            <person name="Rizzo M."/>
            <person name="Rooney T."/>
            <person name="Rowley D."/>
            <person name="Sakano H."/>
            <person name="Salzberg S.L."/>
            <person name="Schwartz J.R."/>
            <person name="Shinn P."/>
            <person name="Southwick A.M."/>
            <person name="Sun H."/>
            <person name="Tallon L.J."/>
            <person name="Tambunga G."/>
            <person name="Toriumi M.J."/>
            <person name="Town C.D."/>
            <person name="Utterback T."/>
            <person name="Van Aken S."/>
            <person name="Vaysberg M."/>
            <person name="Vysotskaia V.S."/>
            <person name="Walker M."/>
            <person name="Wu D."/>
            <person name="Yu G."/>
            <person name="Fraser C.M."/>
            <person name="Venter J.C."/>
            <person name="Davis R.W."/>
        </authorList>
    </citation>
    <scope>NUCLEOTIDE SEQUENCE [LARGE SCALE GENOMIC DNA]</scope>
    <source>
        <strain>cv. Columbia</strain>
    </source>
</reference>
<reference key="2">
    <citation type="journal article" date="2017" name="Plant J.">
        <title>Araport11: a complete reannotation of the Arabidopsis thaliana reference genome.</title>
        <authorList>
            <person name="Cheng C.Y."/>
            <person name="Krishnakumar V."/>
            <person name="Chan A.P."/>
            <person name="Thibaud-Nissen F."/>
            <person name="Schobel S."/>
            <person name="Town C.D."/>
        </authorList>
    </citation>
    <scope>GENOME REANNOTATION</scope>
    <source>
        <strain>cv. Columbia</strain>
    </source>
</reference>
<reference key="3">
    <citation type="journal article" date="2004" name="Genome Res.">
        <title>Whole genome sequence comparisons and 'full-length' cDNA sequences: a combined approach to evaluate and improve Arabidopsis genome annotation.</title>
        <authorList>
            <person name="Castelli V."/>
            <person name="Aury J.-M."/>
            <person name="Jaillon O."/>
            <person name="Wincker P."/>
            <person name="Clepet C."/>
            <person name="Menard M."/>
            <person name="Cruaud C."/>
            <person name="Quetier F."/>
            <person name="Scarpelli C."/>
            <person name="Schaechter V."/>
            <person name="Temple G."/>
            <person name="Caboche M."/>
            <person name="Weissenbach J."/>
            <person name="Salanoubat M."/>
        </authorList>
    </citation>
    <scope>NUCLEOTIDE SEQUENCE [LARGE SCALE MRNA] (ISOFORM 1)</scope>
    <source>
        <strain>cv. Columbia</strain>
    </source>
</reference>
<reference key="4">
    <citation type="journal article" date="2002" name="Science">
        <title>Functional annotation of a full-length Arabidopsis cDNA collection.</title>
        <authorList>
            <person name="Seki M."/>
            <person name="Narusaka M."/>
            <person name="Kamiya A."/>
            <person name="Ishida J."/>
            <person name="Satou M."/>
            <person name="Sakurai T."/>
            <person name="Nakajima M."/>
            <person name="Enju A."/>
            <person name="Akiyama K."/>
            <person name="Oono Y."/>
            <person name="Muramatsu M."/>
            <person name="Hayashizaki Y."/>
            <person name="Kawai J."/>
            <person name="Carninci P."/>
            <person name="Itoh M."/>
            <person name="Ishii Y."/>
            <person name="Arakawa T."/>
            <person name="Shibata K."/>
            <person name="Shinagawa A."/>
            <person name="Shinozaki K."/>
        </authorList>
    </citation>
    <scope>NUCLEOTIDE SEQUENCE [LARGE SCALE MRNA] OF 4-313 (ISOFORM 2)</scope>
    <source>
        <strain>cv. Columbia</strain>
    </source>
</reference>
<feature type="transit peptide" description="Chloroplast" evidence="2">
    <location>
        <begin position="1"/>
        <end position="43"/>
    </location>
</feature>
<feature type="chain" id="PRO_0000363328" description="RNA pseudouridine synthase 2, chloroplastic">
    <location>
        <begin position="44"/>
        <end position="430"/>
    </location>
</feature>
<feature type="domain" description="S4 RNA-binding" evidence="3">
    <location>
        <begin position="82"/>
        <end position="155"/>
    </location>
</feature>
<feature type="region of interest" description="Disordered" evidence="4">
    <location>
        <begin position="195"/>
        <end position="222"/>
    </location>
</feature>
<feature type="compositionally biased region" description="Acidic residues" evidence="4">
    <location>
        <begin position="196"/>
        <end position="214"/>
    </location>
</feature>
<feature type="active site" evidence="1">
    <location>
        <position position="234"/>
    </location>
</feature>
<feature type="splice variant" id="VSP_036289" description="In isoform 2." evidence="5">
    <location>
        <begin position="314"/>
        <end position="430"/>
    </location>
</feature>
<organism>
    <name type="scientific">Arabidopsis thaliana</name>
    <name type="common">Mouse-ear cress</name>
    <dbReference type="NCBI Taxonomy" id="3702"/>
    <lineage>
        <taxon>Eukaryota</taxon>
        <taxon>Viridiplantae</taxon>
        <taxon>Streptophyta</taxon>
        <taxon>Embryophyta</taxon>
        <taxon>Tracheophyta</taxon>
        <taxon>Spermatophyta</taxon>
        <taxon>Magnoliopsida</taxon>
        <taxon>eudicotyledons</taxon>
        <taxon>Gunneridae</taxon>
        <taxon>Pentapetalae</taxon>
        <taxon>rosids</taxon>
        <taxon>malvids</taxon>
        <taxon>Brassicales</taxon>
        <taxon>Brassicaceae</taxon>
        <taxon>Camelineae</taxon>
        <taxon>Arabidopsis</taxon>
    </lineage>
</organism>
<gene>
    <name type="ordered locus">At1g76050</name>
    <name type="ORF">T4O12.210</name>
</gene>
<protein>
    <recommendedName>
        <fullName>RNA pseudouridine synthase 2, chloroplastic</fullName>
        <ecNumber>5.4.99.-</ecNumber>
    </recommendedName>
    <alternativeName>
        <fullName>RNA pseudouridylate synthase 2</fullName>
    </alternativeName>
    <alternativeName>
        <fullName>RNA-uridine isomerase 2</fullName>
    </alternativeName>
</protein>
<accession>Q3ECD0</accession>
<accession>Q8GY94</accession>
<accession>Q9LQR4</accession>
<dbReference type="EC" id="5.4.99.-"/>
<dbReference type="EMBL" id="AC007396">
    <property type="protein sequence ID" value="AAF26765.1"/>
    <property type="status" value="ALT_SEQ"/>
    <property type="molecule type" value="Genomic_DNA"/>
</dbReference>
<dbReference type="EMBL" id="CP002684">
    <property type="protein sequence ID" value="AEE35789.1"/>
    <property type="molecule type" value="Genomic_DNA"/>
</dbReference>
<dbReference type="EMBL" id="CP002684">
    <property type="protein sequence ID" value="AEE35790.1"/>
    <property type="molecule type" value="Genomic_DNA"/>
</dbReference>
<dbReference type="EMBL" id="BX816325">
    <property type="status" value="NOT_ANNOTATED_CDS"/>
    <property type="molecule type" value="mRNA"/>
</dbReference>
<dbReference type="EMBL" id="AK117781">
    <property type="protein sequence ID" value="BAC42428.1"/>
    <property type="status" value="ALT_INIT"/>
    <property type="molecule type" value="mRNA"/>
</dbReference>
<dbReference type="RefSeq" id="NP_177732.2">
    <molecule id="Q3ECD0-2"/>
    <property type="nucleotide sequence ID" value="NM_106254.3"/>
</dbReference>
<dbReference type="RefSeq" id="NP_974151.1">
    <molecule id="Q3ECD0-1"/>
    <property type="nucleotide sequence ID" value="NM_202422.3"/>
</dbReference>
<dbReference type="SMR" id="Q3ECD0"/>
<dbReference type="FunCoup" id="Q3ECD0">
    <property type="interactions" value="484"/>
</dbReference>
<dbReference type="STRING" id="3702.Q3ECD0"/>
<dbReference type="PaxDb" id="3702-AT1G76050.2"/>
<dbReference type="ProteomicsDB" id="225915">
    <molecule id="Q3ECD0-1"/>
</dbReference>
<dbReference type="EnsemblPlants" id="AT1G76050.1">
    <molecule id="Q3ECD0-2"/>
    <property type="protein sequence ID" value="AT1G76050.1"/>
    <property type="gene ID" value="AT1G76050"/>
</dbReference>
<dbReference type="EnsemblPlants" id="AT1G76050.2">
    <molecule id="Q3ECD0-1"/>
    <property type="protein sequence ID" value="AT1G76050.2"/>
    <property type="gene ID" value="AT1G76050"/>
</dbReference>
<dbReference type="GeneID" id="843937"/>
<dbReference type="Gramene" id="AT1G76050.1">
    <molecule id="Q3ECD0-2"/>
    <property type="protein sequence ID" value="AT1G76050.1"/>
    <property type="gene ID" value="AT1G76050"/>
</dbReference>
<dbReference type="Gramene" id="AT1G76050.2">
    <molecule id="Q3ECD0-1"/>
    <property type="protein sequence ID" value="AT1G76050.2"/>
    <property type="gene ID" value="AT1G76050"/>
</dbReference>
<dbReference type="KEGG" id="ath:AT1G76050"/>
<dbReference type="Araport" id="AT1G76050"/>
<dbReference type="TAIR" id="AT1G76050"/>
<dbReference type="eggNOG" id="KOG1919">
    <property type="taxonomic scope" value="Eukaryota"/>
</dbReference>
<dbReference type="HOGENOM" id="CLU_016902_4_3_1"/>
<dbReference type="InParanoid" id="Q3ECD0"/>
<dbReference type="OMA" id="KSERAYT"/>
<dbReference type="PhylomeDB" id="Q3ECD0"/>
<dbReference type="BioCyc" id="ARA:AT1G76050-MONOMER"/>
<dbReference type="PRO" id="PR:Q3ECD0"/>
<dbReference type="Proteomes" id="UP000006548">
    <property type="component" value="Chromosome 1"/>
</dbReference>
<dbReference type="ExpressionAtlas" id="Q3ECD0">
    <property type="expression patterns" value="baseline and differential"/>
</dbReference>
<dbReference type="GO" id="GO:0009507">
    <property type="term" value="C:chloroplast"/>
    <property type="evidence" value="ECO:0007669"/>
    <property type="project" value="UniProtKB-SubCell"/>
</dbReference>
<dbReference type="GO" id="GO:0009982">
    <property type="term" value="F:pseudouridine synthase activity"/>
    <property type="evidence" value="ECO:0000304"/>
    <property type="project" value="TAIR"/>
</dbReference>
<dbReference type="GO" id="GO:0003723">
    <property type="term" value="F:RNA binding"/>
    <property type="evidence" value="ECO:0007669"/>
    <property type="project" value="UniProtKB-KW"/>
</dbReference>
<dbReference type="GO" id="GO:0001522">
    <property type="term" value="P:pseudouridine synthesis"/>
    <property type="evidence" value="ECO:0007669"/>
    <property type="project" value="InterPro"/>
</dbReference>
<dbReference type="CDD" id="cd02869">
    <property type="entry name" value="PseudoU_synth_RluA_like"/>
    <property type="match status" value="1"/>
</dbReference>
<dbReference type="CDD" id="cd00165">
    <property type="entry name" value="S4"/>
    <property type="match status" value="1"/>
</dbReference>
<dbReference type="FunFam" id="3.30.2350.10:FF:000032">
    <property type="entry name" value="Pseudouridine synthase"/>
    <property type="match status" value="1"/>
</dbReference>
<dbReference type="FunFam" id="3.10.290.10:FF:000024">
    <property type="entry name" value="RNA pseudouridine synthase 2 chloroplastic"/>
    <property type="match status" value="1"/>
</dbReference>
<dbReference type="Gene3D" id="3.30.2350.10">
    <property type="entry name" value="Pseudouridine synthase"/>
    <property type="match status" value="1"/>
</dbReference>
<dbReference type="Gene3D" id="3.10.290.10">
    <property type="entry name" value="RNA-binding S4 domain"/>
    <property type="match status" value="1"/>
</dbReference>
<dbReference type="InterPro" id="IPR020103">
    <property type="entry name" value="PsdUridine_synth_cat_dom_sf"/>
</dbReference>
<dbReference type="InterPro" id="IPR006224">
    <property type="entry name" value="PsdUridine_synth_RluA-like_CS"/>
</dbReference>
<dbReference type="InterPro" id="IPR006225">
    <property type="entry name" value="PsdUridine_synth_RluC/D"/>
</dbReference>
<dbReference type="InterPro" id="IPR006145">
    <property type="entry name" value="PsdUridine_synth_RsuA/RluA"/>
</dbReference>
<dbReference type="InterPro" id="IPR050188">
    <property type="entry name" value="RluA_PseudoU_synthase"/>
</dbReference>
<dbReference type="InterPro" id="IPR002942">
    <property type="entry name" value="S4_RNA-bd"/>
</dbReference>
<dbReference type="InterPro" id="IPR036986">
    <property type="entry name" value="S4_RNA-bd_sf"/>
</dbReference>
<dbReference type="NCBIfam" id="TIGR00005">
    <property type="entry name" value="rluA_subfam"/>
    <property type="match status" value="1"/>
</dbReference>
<dbReference type="PANTHER" id="PTHR21600">
    <property type="entry name" value="MITOCHONDRIAL RNA PSEUDOURIDINE SYNTHASE"/>
    <property type="match status" value="1"/>
</dbReference>
<dbReference type="PANTHER" id="PTHR21600:SF87">
    <property type="entry name" value="RNA PSEUDOURIDYLATE SYNTHASE DOMAIN-CONTAINING PROTEIN 1"/>
    <property type="match status" value="1"/>
</dbReference>
<dbReference type="Pfam" id="PF00849">
    <property type="entry name" value="PseudoU_synth_2"/>
    <property type="match status" value="1"/>
</dbReference>
<dbReference type="Pfam" id="PF01479">
    <property type="entry name" value="S4"/>
    <property type="match status" value="1"/>
</dbReference>
<dbReference type="SMART" id="SM00363">
    <property type="entry name" value="S4"/>
    <property type="match status" value="1"/>
</dbReference>
<dbReference type="SUPFAM" id="SSF55174">
    <property type="entry name" value="Alpha-L RNA-binding motif"/>
    <property type="match status" value="1"/>
</dbReference>
<dbReference type="SUPFAM" id="SSF55120">
    <property type="entry name" value="Pseudouridine synthase"/>
    <property type="match status" value="1"/>
</dbReference>
<dbReference type="PROSITE" id="PS01129">
    <property type="entry name" value="PSI_RLU"/>
    <property type="match status" value="1"/>
</dbReference>
<dbReference type="PROSITE" id="PS50889">
    <property type="entry name" value="S4"/>
    <property type="match status" value="1"/>
</dbReference>